<gene>
    <name type="ORF">LELG_04389</name>
</gene>
<organism>
    <name type="scientific">Lodderomyces elongisporus (strain ATCC 11503 / CBS 2605 / JCM 1781 / NBRC 1676 / NRRL YB-4239)</name>
    <name type="common">Yeast</name>
    <name type="synonym">Saccharomyces elongisporus</name>
    <dbReference type="NCBI Taxonomy" id="379508"/>
    <lineage>
        <taxon>Eukaryota</taxon>
        <taxon>Fungi</taxon>
        <taxon>Dikarya</taxon>
        <taxon>Ascomycota</taxon>
        <taxon>Saccharomycotina</taxon>
        <taxon>Pichiomycetes</taxon>
        <taxon>Debaryomycetaceae</taxon>
        <taxon>Candida/Lodderomyces clade</taxon>
        <taxon>Lodderomyces</taxon>
    </lineage>
</organism>
<reference key="1">
    <citation type="journal article" date="2009" name="Nature">
        <title>Evolution of pathogenicity and sexual reproduction in eight Candida genomes.</title>
        <authorList>
            <person name="Butler G."/>
            <person name="Rasmussen M.D."/>
            <person name="Lin M.F."/>
            <person name="Santos M.A.S."/>
            <person name="Sakthikumar S."/>
            <person name="Munro C.A."/>
            <person name="Rheinbay E."/>
            <person name="Grabherr M."/>
            <person name="Forche A."/>
            <person name="Reedy J.L."/>
            <person name="Agrafioti I."/>
            <person name="Arnaud M.B."/>
            <person name="Bates S."/>
            <person name="Brown A.J.P."/>
            <person name="Brunke S."/>
            <person name="Costanzo M.C."/>
            <person name="Fitzpatrick D.A."/>
            <person name="de Groot P.W.J."/>
            <person name="Harris D."/>
            <person name="Hoyer L.L."/>
            <person name="Hube B."/>
            <person name="Klis F.M."/>
            <person name="Kodira C."/>
            <person name="Lennard N."/>
            <person name="Logue M.E."/>
            <person name="Martin R."/>
            <person name="Neiman A.M."/>
            <person name="Nikolaou E."/>
            <person name="Quail M.A."/>
            <person name="Quinn J."/>
            <person name="Santos M.C."/>
            <person name="Schmitzberger F.F."/>
            <person name="Sherlock G."/>
            <person name="Shah P."/>
            <person name="Silverstein K.A.T."/>
            <person name="Skrzypek M.S."/>
            <person name="Soll D."/>
            <person name="Staggs R."/>
            <person name="Stansfield I."/>
            <person name="Stumpf M.P.H."/>
            <person name="Sudbery P.E."/>
            <person name="Srikantha T."/>
            <person name="Zeng Q."/>
            <person name="Berman J."/>
            <person name="Berriman M."/>
            <person name="Heitman J."/>
            <person name="Gow N.A.R."/>
            <person name="Lorenz M.C."/>
            <person name="Birren B.W."/>
            <person name="Kellis M."/>
            <person name="Cuomo C.A."/>
        </authorList>
    </citation>
    <scope>NUCLEOTIDE SEQUENCE [LARGE SCALE GENOMIC DNA]</scope>
    <source>
        <strain>ATCC 11503 / BCRC 21390 / CBS 2605 / JCM 1781 / NBRC 1676 / NRRL YB-4239</strain>
    </source>
</reference>
<name>LIPA_LODEL</name>
<sequence>MLPRSINILKLRPTTQVTTTALRALATEAKTTLGATPGSTSTSTSTSTATTTTLESTSTSTSGDATETTIKETKSIKRKRTFFTDELNKGPSFDDFVSGKAKDMLEDPLELARKDPNAKLPLWLKVPIPKGKSFHNVKNDVRELKLSTVCEEAKCPNIGECWGGKKSEATATIMLLGDTCTRGCRFCSVKTNRKPGKPDPMEPENTAEAISRWGLGYVVLTTVDRDDLIDGGANHLKETVQKIKFKAPQILVEVLGGDFRGDLEMVKILANSGLDVYAHNMETVEALTPHIRDRRATYRQSLAVLRTAKETKPSLITKTSLMLGFGETDDQIRQTLKDLREVGCDVVTFGQYMRPTKRHMKVVEYVTPEKFDYWRDVALEMGFLYVASGPLVRSSYKAGEAFIENVLKKRKHNVGESPRMLQEVKPSIFKRA</sequence>
<protein>
    <recommendedName>
        <fullName evidence="1">Lipoyl synthase, mitochondrial</fullName>
        <ecNumber evidence="1">2.8.1.8</ecNumber>
    </recommendedName>
    <alternativeName>
        <fullName evidence="1">Lipoate synthase</fullName>
        <shortName evidence="1">LS</shortName>
        <shortName evidence="1">Lip-syn</shortName>
    </alternativeName>
    <alternativeName>
        <fullName evidence="1">Lipoic acid synthase</fullName>
    </alternativeName>
</protein>
<keyword id="KW-0004">4Fe-4S</keyword>
<keyword id="KW-0408">Iron</keyword>
<keyword id="KW-0411">Iron-sulfur</keyword>
<keyword id="KW-0479">Metal-binding</keyword>
<keyword id="KW-0496">Mitochondrion</keyword>
<keyword id="KW-1185">Reference proteome</keyword>
<keyword id="KW-0949">S-adenosyl-L-methionine</keyword>
<keyword id="KW-0808">Transferase</keyword>
<proteinExistence type="inferred from homology"/>
<comment type="function">
    <text evidence="1">Catalyzes the radical-mediated insertion of two sulfur atoms into the C-6 and C-8 positions of the octanoyl moiety bound to the lipoyl domains of lipoate-dependent enzymes, thereby converting the octanoylated domains into lipoylated derivatives.</text>
</comment>
<comment type="catalytic activity">
    <reaction evidence="1">
        <text>[[Fe-S] cluster scaffold protein carrying a second [4Fe-4S](2+) cluster] + N(6)-octanoyl-L-lysyl-[protein] + 2 oxidized [2Fe-2S]-[ferredoxin] + 2 S-adenosyl-L-methionine + 4 H(+) = [[Fe-S] cluster scaffold protein] + N(6)-[(R)-dihydrolipoyl]-L-lysyl-[protein] + 4 Fe(3+) + 2 hydrogen sulfide + 2 5'-deoxyadenosine + 2 L-methionine + 2 reduced [2Fe-2S]-[ferredoxin]</text>
        <dbReference type="Rhea" id="RHEA:16585"/>
        <dbReference type="Rhea" id="RHEA-COMP:9928"/>
        <dbReference type="Rhea" id="RHEA-COMP:10000"/>
        <dbReference type="Rhea" id="RHEA-COMP:10001"/>
        <dbReference type="Rhea" id="RHEA-COMP:10475"/>
        <dbReference type="Rhea" id="RHEA-COMP:14568"/>
        <dbReference type="Rhea" id="RHEA-COMP:14569"/>
        <dbReference type="ChEBI" id="CHEBI:15378"/>
        <dbReference type="ChEBI" id="CHEBI:17319"/>
        <dbReference type="ChEBI" id="CHEBI:29034"/>
        <dbReference type="ChEBI" id="CHEBI:29919"/>
        <dbReference type="ChEBI" id="CHEBI:33722"/>
        <dbReference type="ChEBI" id="CHEBI:33737"/>
        <dbReference type="ChEBI" id="CHEBI:33738"/>
        <dbReference type="ChEBI" id="CHEBI:57844"/>
        <dbReference type="ChEBI" id="CHEBI:59789"/>
        <dbReference type="ChEBI" id="CHEBI:78809"/>
        <dbReference type="ChEBI" id="CHEBI:83100"/>
        <dbReference type="EC" id="2.8.1.8"/>
    </reaction>
</comment>
<comment type="cofactor">
    <cofactor evidence="1">
        <name>[4Fe-4S] cluster</name>
        <dbReference type="ChEBI" id="CHEBI:49883"/>
    </cofactor>
    <text evidence="1">Binds 2 [4Fe-4S] clusters per subunit. One cluster is coordinated with 3 cysteines and an exchangeable S-adenosyl-L-methionine.</text>
</comment>
<comment type="pathway">
    <text evidence="1">Protein modification; protein lipoylation via endogenous pathway; protein N(6)-(lipoyl)lysine from octanoyl-[acyl-carrier-protein]: step 2/2.</text>
</comment>
<comment type="subcellular location">
    <subcellularLocation>
        <location evidence="1">Mitochondrion</location>
    </subcellularLocation>
</comment>
<comment type="miscellaneous">
    <text evidence="1">This protein may be expected to contain an N-terminal transit peptide but none has been predicted.</text>
</comment>
<comment type="similarity">
    <text evidence="1">Belongs to the radical SAM superfamily. Lipoyl synthase family.</text>
</comment>
<dbReference type="EC" id="2.8.1.8" evidence="1"/>
<dbReference type="EMBL" id="CH981529">
    <property type="protein sequence ID" value="EDK46208.1"/>
    <property type="molecule type" value="Genomic_DNA"/>
</dbReference>
<dbReference type="RefSeq" id="XP_001524417.1">
    <property type="nucleotide sequence ID" value="XM_001524367.1"/>
</dbReference>
<dbReference type="SMR" id="A5E450"/>
<dbReference type="FunCoup" id="A5E450">
    <property type="interactions" value="580"/>
</dbReference>
<dbReference type="STRING" id="379508.A5E450"/>
<dbReference type="GeneID" id="5231419"/>
<dbReference type="KEGG" id="lel:PVL30_004106"/>
<dbReference type="VEuPathDB" id="FungiDB:LELG_04389"/>
<dbReference type="eggNOG" id="KOG2672">
    <property type="taxonomic scope" value="Eukaryota"/>
</dbReference>
<dbReference type="HOGENOM" id="CLU_033144_0_2_1"/>
<dbReference type="InParanoid" id="A5E450"/>
<dbReference type="OMA" id="PYCDIDF"/>
<dbReference type="OrthoDB" id="3231at2759"/>
<dbReference type="UniPathway" id="UPA00538">
    <property type="reaction ID" value="UER00593"/>
</dbReference>
<dbReference type="Proteomes" id="UP000001996">
    <property type="component" value="Unassembled WGS sequence"/>
</dbReference>
<dbReference type="GO" id="GO:0005739">
    <property type="term" value="C:mitochondrion"/>
    <property type="evidence" value="ECO:0007669"/>
    <property type="project" value="UniProtKB-SubCell"/>
</dbReference>
<dbReference type="GO" id="GO:0051539">
    <property type="term" value="F:4 iron, 4 sulfur cluster binding"/>
    <property type="evidence" value="ECO:0007669"/>
    <property type="project" value="UniProtKB-UniRule"/>
</dbReference>
<dbReference type="GO" id="GO:0016992">
    <property type="term" value="F:lipoate synthase activity"/>
    <property type="evidence" value="ECO:0007669"/>
    <property type="project" value="UniProtKB-UniRule"/>
</dbReference>
<dbReference type="GO" id="GO:0046872">
    <property type="term" value="F:metal ion binding"/>
    <property type="evidence" value="ECO:0007669"/>
    <property type="project" value="UniProtKB-KW"/>
</dbReference>
<dbReference type="CDD" id="cd01335">
    <property type="entry name" value="Radical_SAM"/>
    <property type="match status" value="1"/>
</dbReference>
<dbReference type="FunFam" id="3.20.20.70:FF:000036">
    <property type="entry name" value="Lipoyl synthase, mitochondrial"/>
    <property type="match status" value="1"/>
</dbReference>
<dbReference type="Gene3D" id="3.20.20.70">
    <property type="entry name" value="Aldolase class I"/>
    <property type="match status" value="1"/>
</dbReference>
<dbReference type="HAMAP" id="MF_00206">
    <property type="entry name" value="Lipoyl_synth"/>
    <property type="match status" value="1"/>
</dbReference>
<dbReference type="InterPro" id="IPR013785">
    <property type="entry name" value="Aldolase_TIM"/>
</dbReference>
<dbReference type="InterPro" id="IPR006638">
    <property type="entry name" value="Elp3/MiaA/NifB-like_rSAM"/>
</dbReference>
<dbReference type="InterPro" id="IPR031691">
    <property type="entry name" value="LIAS_N"/>
</dbReference>
<dbReference type="InterPro" id="IPR003698">
    <property type="entry name" value="Lipoyl_synth"/>
</dbReference>
<dbReference type="InterPro" id="IPR007197">
    <property type="entry name" value="rSAM"/>
</dbReference>
<dbReference type="NCBIfam" id="TIGR00510">
    <property type="entry name" value="lipA"/>
    <property type="match status" value="1"/>
</dbReference>
<dbReference type="NCBIfam" id="NF004019">
    <property type="entry name" value="PRK05481.1"/>
    <property type="match status" value="1"/>
</dbReference>
<dbReference type="NCBIfam" id="NF009544">
    <property type="entry name" value="PRK12928.1"/>
    <property type="match status" value="1"/>
</dbReference>
<dbReference type="PANTHER" id="PTHR10949">
    <property type="entry name" value="LIPOYL SYNTHASE"/>
    <property type="match status" value="1"/>
</dbReference>
<dbReference type="PANTHER" id="PTHR10949:SF0">
    <property type="entry name" value="LIPOYL SYNTHASE, MITOCHONDRIAL"/>
    <property type="match status" value="1"/>
</dbReference>
<dbReference type="Pfam" id="PF16881">
    <property type="entry name" value="LIAS_N"/>
    <property type="match status" value="1"/>
</dbReference>
<dbReference type="Pfam" id="PF04055">
    <property type="entry name" value="Radical_SAM"/>
    <property type="match status" value="1"/>
</dbReference>
<dbReference type="SFLD" id="SFLDF00271">
    <property type="entry name" value="lipoyl_synthase"/>
    <property type="match status" value="1"/>
</dbReference>
<dbReference type="SFLD" id="SFLDG01058">
    <property type="entry name" value="lipoyl_synthase_like"/>
    <property type="match status" value="1"/>
</dbReference>
<dbReference type="SMART" id="SM00729">
    <property type="entry name" value="Elp3"/>
    <property type="match status" value="1"/>
</dbReference>
<dbReference type="SUPFAM" id="SSF102114">
    <property type="entry name" value="Radical SAM enzymes"/>
    <property type="match status" value="1"/>
</dbReference>
<dbReference type="PROSITE" id="PS51918">
    <property type="entry name" value="RADICAL_SAM"/>
    <property type="match status" value="1"/>
</dbReference>
<accession>A5E450</accession>
<evidence type="ECO:0000255" key="1">
    <source>
        <dbReference type="HAMAP-Rule" id="MF_03123"/>
    </source>
</evidence>
<evidence type="ECO:0000255" key="2">
    <source>
        <dbReference type="PROSITE-ProRule" id="PRU01266"/>
    </source>
</evidence>
<evidence type="ECO:0000256" key="3">
    <source>
        <dbReference type="SAM" id="MobiDB-lite"/>
    </source>
</evidence>
<feature type="chain" id="PRO_0000398271" description="Lipoyl synthase, mitochondrial">
    <location>
        <begin position="1"/>
        <end position="432"/>
    </location>
</feature>
<feature type="domain" description="Radical SAM core" evidence="2">
    <location>
        <begin position="165"/>
        <end position="384"/>
    </location>
</feature>
<feature type="region of interest" description="Disordered" evidence="3">
    <location>
        <begin position="32"/>
        <end position="71"/>
    </location>
</feature>
<feature type="compositionally biased region" description="Low complexity" evidence="3">
    <location>
        <begin position="32"/>
        <end position="68"/>
    </location>
</feature>
<feature type="binding site" evidence="1">
    <location>
        <position position="150"/>
    </location>
    <ligand>
        <name>[4Fe-4S] cluster</name>
        <dbReference type="ChEBI" id="CHEBI:49883"/>
        <label>1</label>
    </ligand>
</feature>
<feature type="binding site" evidence="1">
    <location>
        <position position="155"/>
    </location>
    <ligand>
        <name>[4Fe-4S] cluster</name>
        <dbReference type="ChEBI" id="CHEBI:49883"/>
        <label>1</label>
    </ligand>
</feature>
<feature type="binding site" evidence="1">
    <location>
        <position position="161"/>
    </location>
    <ligand>
        <name>[4Fe-4S] cluster</name>
        <dbReference type="ChEBI" id="CHEBI:49883"/>
        <label>1</label>
    </ligand>
</feature>
<feature type="binding site" evidence="1">
    <location>
        <position position="180"/>
    </location>
    <ligand>
        <name>[4Fe-4S] cluster</name>
        <dbReference type="ChEBI" id="CHEBI:49883"/>
        <label>2</label>
        <note>4Fe-4S-S-AdoMet</note>
    </ligand>
</feature>
<feature type="binding site" evidence="1">
    <location>
        <position position="184"/>
    </location>
    <ligand>
        <name>[4Fe-4S] cluster</name>
        <dbReference type="ChEBI" id="CHEBI:49883"/>
        <label>2</label>
        <note>4Fe-4S-S-AdoMet</note>
    </ligand>
</feature>
<feature type="binding site" evidence="1">
    <location>
        <position position="187"/>
    </location>
    <ligand>
        <name>[4Fe-4S] cluster</name>
        <dbReference type="ChEBI" id="CHEBI:49883"/>
        <label>2</label>
        <note>4Fe-4S-S-AdoMet</note>
    </ligand>
</feature>
<feature type="binding site" evidence="1">
    <location>
        <position position="395"/>
    </location>
    <ligand>
        <name>[4Fe-4S] cluster</name>
        <dbReference type="ChEBI" id="CHEBI:49883"/>
        <label>1</label>
    </ligand>
</feature>